<name>ENOB_HUMAN</name>
<comment type="function">
    <text evidence="2">Glycolytic enzyme that catalyzes the conversion of 2-phosphoglycerate to phosphoenolpyruvate. Appears to have a function in striated muscle development and regeneration.</text>
</comment>
<comment type="catalytic activity">
    <reaction evidence="2">
        <text>(2R)-2-phosphoglycerate = phosphoenolpyruvate + H2O</text>
        <dbReference type="Rhea" id="RHEA:10164"/>
        <dbReference type="ChEBI" id="CHEBI:15377"/>
        <dbReference type="ChEBI" id="CHEBI:58289"/>
        <dbReference type="ChEBI" id="CHEBI:58702"/>
        <dbReference type="EC" id="4.2.1.11"/>
    </reaction>
    <physiologicalReaction direction="left-to-right" evidence="2">
        <dbReference type="Rhea" id="RHEA:10165"/>
    </physiologicalReaction>
</comment>
<comment type="cofactor">
    <cofactor>
        <name>Mg(2+)</name>
        <dbReference type="ChEBI" id="CHEBI:18420"/>
    </cofactor>
    <text>Mg(2+) is required for catalysis and for stabilizing the dimer.</text>
</comment>
<comment type="pathway">
    <text evidence="2">Carbohydrate degradation; glycolysis; pyruvate from D-glyceraldehyde 3-phosphate: step 4/5.</text>
</comment>
<comment type="subunit">
    <text evidence="5">Mammalian enolase is composed of 3 isozyme subunits, alpha, beta and gamma, which can form homodimers or heterodimers which are cell-type and development-specific. Interacts with PNKD.</text>
</comment>
<comment type="interaction">
    <interactant intactId="EBI-4287222">
        <id>P13929</id>
    </interactant>
    <interactant intactId="EBI-353877">
        <id>P06733</id>
        <label>ENO1</label>
    </interactant>
    <organismsDiffer>false</organismsDiffer>
    <experiments>3</experiments>
</comment>
<comment type="subcellular location">
    <subcellularLocation>
        <location>Cytoplasm</location>
    </subcellularLocation>
    <text evidence="1">Localized to the Z line. Some colocalization with CKM at M-band (By similarity).</text>
</comment>
<comment type="alternative products">
    <event type="alternative splicing"/>
    <isoform>
        <id>P13929-1</id>
        <name>1</name>
        <sequence type="displayed"/>
    </isoform>
    <isoform>
        <id>P13929-2</id>
        <name>2</name>
        <sequence type="described" ref="VSP_037753"/>
    </isoform>
    <isoform>
        <id>P13929-3</id>
        <name>3</name>
        <sequence type="described" ref="VSP_037752"/>
    </isoform>
</comment>
<comment type="tissue specificity">
    <text>The alpha/alpha homodimer is expressed in embryo and in most adult tissues. The alpha/beta heterodimer and the beta/beta homodimer are found in striated muscle, and the alpha/gamma heterodimer and the gamma/gamma homodimer in neurons.</text>
</comment>
<comment type="developmental stage">
    <text>During ontogenesis, there is a transition from the alpha/alpha homodimer to the alpha/beta heterodimer in striated muscle cells, and to the alpha/gamma heterodimer in nerve cells.</text>
</comment>
<comment type="disease" evidence="3">
    <disease id="DI-02013">
        <name>Glycogen storage disease 13</name>
        <acronym>GSD13</acronym>
        <description>A metabolic disorder that results in exercise-induced myalgias, generalized muscle weakness and fatigability. It is characterized by increased serum creatine kinase and decreased enolase 3 activity. Dramatically reduced protein levels with focal sarcoplasmic accumulation of glycogen-beta particles are detected on ultrastructural analysis.</description>
        <dbReference type="MIM" id="612932"/>
    </disease>
    <text>The disease is caused by variants affecting the gene represented in this entry.</text>
</comment>
<comment type="similarity">
    <text evidence="10">Belongs to the enolase family.</text>
</comment>
<dbReference type="EC" id="4.2.1.11" evidence="2"/>
<dbReference type="EMBL" id="X16504">
    <property type="protein sequence ID" value="CAA34513.1"/>
    <property type="molecule type" value="mRNA"/>
</dbReference>
<dbReference type="EMBL" id="X51957">
    <property type="protein sequence ID" value="CAA36216.1"/>
    <property type="molecule type" value="mRNA"/>
</dbReference>
<dbReference type="EMBL" id="X55976">
    <property type="protein sequence ID" value="CAA39446.1"/>
    <property type="molecule type" value="Genomic_DNA"/>
</dbReference>
<dbReference type="EMBL" id="X56832">
    <property type="protein sequence ID" value="CAA40163.1"/>
    <property type="molecule type" value="Genomic_DNA"/>
</dbReference>
<dbReference type="EMBL" id="AK300662">
    <property type="protein sequence ID" value="BAG62348.1"/>
    <property type="molecule type" value="mRNA"/>
</dbReference>
<dbReference type="EMBL" id="AK300709">
    <property type="protein sequence ID" value="BAG62388.1"/>
    <property type="molecule type" value="mRNA"/>
</dbReference>
<dbReference type="EMBL" id="AC004771">
    <property type="status" value="NOT_ANNOTATED_CDS"/>
    <property type="molecule type" value="Genomic_DNA"/>
</dbReference>
<dbReference type="EMBL" id="AC109333">
    <property type="status" value="NOT_ANNOTATED_CDS"/>
    <property type="molecule type" value="Genomic_DNA"/>
</dbReference>
<dbReference type="EMBL" id="CH471108">
    <property type="protein sequence ID" value="EAW90375.1"/>
    <property type="molecule type" value="Genomic_DNA"/>
</dbReference>
<dbReference type="EMBL" id="CH471108">
    <property type="protein sequence ID" value="EAW90379.1"/>
    <property type="molecule type" value="Genomic_DNA"/>
</dbReference>
<dbReference type="EMBL" id="CH471108">
    <property type="protein sequence ID" value="EAW90380.1"/>
    <property type="molecule type" value="Genomic_DNA"/>
</dbReference>
<dbReference type="EMBL" id="BC017249">
    <property type="protein sequence ID" value="AAH17249.1"/>
    <property type="molecule type" value="mRNA"/>
</dbReference>
<dbReference type="CCDS" id="CCDS11062.1">
    <molecule id="P13929-1"/>
</dbReference>
<dbReference type="CCDS" id="CCDS54070.1">
    <molecule id="P13929-3"/>
</dbReference>
<dbReference type="PIR" id="S06756">
    <property type="entry name" value="S06756"/>
</dbReference>
<dbReference type="RefSeq" id="NP_001180432.1">
    <molecule id="P13929-3"/>
    <property type="nucleotide sequence ID" value="NM_001193503.2"/>
</dbReference>
<dbReference type="RefSeq" id="NP_001361452.1">
    <molecule id="P13929-1"/>
    <property type="nucleotide sequence ID" value="NM_001374523.1"/>
</dbReference>
<dbReference type="RefSeq" id="NP_001967.3">
    <molecule id="P13929-1"/>
    <property type="nucleotide sequence ID" value="NM_001976.5"/>
</dbReference>
<dbReference type="RefSeq" id="NP_443739.3">
    <molecule id="P13929-1"/>
    <property type="nucleotide sequence ID" value="NM_053013.4"/>
</dbReference>
<dbReference type="RefSeq" id="XP_011522031.1">
    <molecule id="P13929-1"/>
    <property type="nucleotide sequence ID" value="XM_011523729.2"/>
</dbReference>
<dbReference type="RefSeq" id="XP_016879835.1">
    <property type="nucleotide sequence ID" value="XM_017024346.1"/>
</dbReference>
<dbReference type="PDB" id="2XSX">
    <property type="method" value="X-ray"/>
    <property type="resolution" value="1.70 A"/>
    <property type="chains" value="A/B=1-434"/>
</dbReference>
<dbReference type="PDBsum" id="2XSX"/>
<dbReference type="SMR" id="P13929"/>
<dbReference type="BioGRID" id="108341">
    <property type="interactions" value="97"/>
</dbReference>
<dbReference type="FunCoup" id="P13929">
    <property type="interactions" value="1038"/>
</dbReference>
<dbReference type="IntAct" id="P13929">
    <property type="interactions" value="30"/>
</dbReference>
<dbReference type="STRING" id="9606.ENSP00000324105"/>
<dbReference type="DrugBank" id="DB01709">
    <property type="generic name" value="2-phospho-D-glyceric acid"/>
</dbReference>
<dbReference type="DrugBank" id="DB02726">
    <property type="generic name" value="2-Phosphoglycolic Acid"/>
</dbReference>
<dbReference type="DrugBank" id="DB01819">
    <property type="generic name" value="Phosphoenolpyruvate"/>
</dbReference>
<dbReference type="DrugBank" id="DB03645">
    <property type="generic name" value="Phosphonoacetohydroxamic Acid"/>
</dbReference>
<dbReference type="GlyGen" id="P13929">
    <property type="glycosylation" value="1 site, 1 O-linked glycan (1 site)"/>
</dbReference>
<dbReference type="iPTMnet" id="P13929"/>
<dbReference type="PhosphoSitePlus" id="P13929"/>
<dbReference type="SwissPalm" id="P13929"/>
<dbReference type="BioMuta" id="ENO3"/>
<dbReference type="DMDM" id="425906077"/>
<dbReference type="jPOST" id="P13929"/>
<dbReference type="MassIVE" id="P13929"/>
<dbReference type="PaxDb" id="9606-ENSP00000324105"/>
<dbReference type="PeptideAtlas" id="P13929"/>
<dbReference type="PRIDE" id="P13929"/>
<dbReference type="ProteomicsDB" id="12760"/>
<dbReference type="ProteomicsDB" id="52999">
    <molecule id="P13929-1"/>
</dbReference>
<dbReference type="ProteomicsDB" id="53000">
    <molecule id="P13929-2"/>
</dbReference>
<dbReference type="ProteomicsDB" id="53001">
    <molecule id="P13929-3"/>
</dbReference>
<dbReference type="Pumba" id="P13929"/>
<dbReference type="Antibodypedia" id="630">
    <property type="antibodies" value="410 antibodies from 35 providers"/>
</dbReference>
<dbReference type="DNASU" id="2027"/>
<dbReference type="Ensembl" id="ENST00000323997.10">
    <molecule id="P13929-1"/>
    <property type="protein sequence ID" value="ENSP00000324105.6"/>
    <property type="gene ID" value="ENSG00000108515.18"/>
</dbReference>
<dbReference type="Ensembl" id="ENST00000518175.1">
    <molecule id="P13929-1"/>
    <property type="protein sequence ID" value="ENSP00000431087.1"/>
    <property type="gene ID" value="ENSG00000108515.18"/>
</dbReference>
<dbReference type="Ensembl" id="ENST00000519584.5">
    <molecule id="P13929-3"/>
    <property type="protein sequence ID" value="ENSP00000430636.1"/>
    <property type="gene ID" value="ENSG00000108515.18"/>
</dbReference>
<dbReference type="Ensembl" id="ENST00000519602.6">
    <molecule id="P13929-1"/>
    <property type="protein sequence ID" value="ENSP00000430055.2"/>
    <property type="gene ID" value="ENSG00000108515.18"/>
</dbReference>
<dbReference type="GeneID" id="2027"/>
<dbReference type="KEGG" id="hsa:2027"/>
<dbReference type="MANE-Select" id="ENST00000519602.6">
    <property type="protein sequence ID" value="ENSP00000430055.2"/>
    <property type="RefSeq nucleotide sequence ID" value="NM_053013.4"/>
    <property type="RefSeq protein sequence ID" value="NP_443739.3"/>
</dbReference>
<dbReference type="UCSC" id="uc002gac.5">
    <molecule id="P13929-1"/>
    <property type="organism name" value="human"/>
</dbReference>
<dbReference type="AGR" id="HGNC:3354"/>
<dbReference type="CTD" id="2027"/>
<dbReference type="DisGeNET" id="2027"/>
<dbReference type="GeneCards" id="ENO3"/>
<dbReference type="HGNC" id="HGNC:3354">
    <property type="gene designation" value="ENO3"/>
</dbReference>
<dbReference type="HPA" id="ENSG00000108515">
    <property type="expression patterns" value="Group enriched (skeletal muscle, tongue)"/>
</dbReference>
<dbReference type="MalaCards" id="ENO3"/>
<dbReference type="MIM" id="131370">
    <property type="type" value="gene"/>
</dbReference>
<dbReference type="MIM" id="612932">
    <property type="type" value="phenotype"/>
</dbReference>
<dbReference type="neXtProt" id="NX_P13929"/>
<dbReference type="OpenTargets" id="ENSG00000108515"/>
<dbReference type="Orphanet" id="99849">
    <property type="disease" value="Glycogen storage disease due to muscle beta-enolase deficiency"/>
</dbReference>
<dbReference type="PharmGKB" id="PA27789"/>
<dbReference type="VEuPathDB" id="HostDB:ENSG00000108515"/>
<dbReference type="eggNOG" id="KOG2670">
    <property type="taxonomic scope" value="Eukaryota"/>
</dbReference>
<dbReference type="GeneTree" id="ENSGT00950000182805"/>
<dbReference type="HOGENOM" id="CLU_031223_0_0_1"/>
<dbReference type="InParanoid" id="P13929"/>
<dbReference type="OMA" id="GMSITKI"/>
<dbReference type="OrthoDB" id="1739814at2759"/>
<dbReference type="PAN-GO" id="P13929">
    <property type="GO annotations" value="3 GO annotations based on evolutionary models"/>
</dbReference>
<dbReference type="PhylomeDB" id="P13929"/>
<dbReference type="TreeFam" id="TF300391"/>
<dbReference type="BioCyc" id="MetaCyc:ENSG00000108515-MONOMER"/>
<dbReference type="PathwayCommons" id="P13929"/>
<dbReference type="Reactome" id="R-HSA-70171">
    <property type="pathway name" value="Glycolysis"/>
</dbReference>
<dbReference type="Reactome" id="R-HSA-70263">
    <property type="pathway name" value="Gluconeogenesis"/>
</dbReference>
<dbReference type="SABIO-RK" id="P13929"/>
<dbReference type="SignaLink" id="P13929"/>
<dbReference type="SIGNOR" id="P13929"/>
<dbReference type="UniPathway" id="UPA00109">
    <property type="reaction ID" value="UER00187"/>
</dbReference>
<dbReference type="BioGRID-ORCS" id="2027">
    <property type="hits" value="17 hits in 1164 CRISPR screens"/>
</dbReference>
<dbReference type="CD-CODE" id="91857CE7">
    <property type="entry name" value="Nucleolus"/>
</dbReference>
<dbReference type="CD-CODE" id="FB4E32DD">
    <property type="entry name" value="Presynaptic clusters and postsynaptic densities"/>
</dbReference>
<dbReference type="ChiTaRS" id="ENO3">
    <property type="organism name" value="human"/>
</dbReference>
<dbReference type="EvolutionaryTrace" id="P13929"/>
<dbReference type="GeneWiki" id="ENO3"/>
<dbReference type="GenomeRNAi" id="2027"/>
<dbReference type="Pharos" id="P13929">
    <property type="development level" value="Tbio"/>
</dbReference>
<dbReference type="PRO" id="PR:P13929"/>
<dbReference type="Proteomes" id="UP000005640">
    <property type="component" value="Chromosome 17"/>
</dbReference>
<dbReference type="RNAct" id="P13929">
    <property type="molecule type" value="protein"/>
</dbReference>
<dbReference type="Bgee" id="ENSG00000108515">
    <property type="expression patterns" value="Expressed in skeletal muscle tissue of rectus abdominis and 129 other cell types or tissues"/>
</dbReference>
<dbReference type="ExpressionAtlas" id="P13929">
    <property type="expression patterns" value="baseline and differential"/>
</dbReference>
<dbReference type="GO" id="GO:0005829">
    <property type="term" value="C:cytosol"/>
    <property type="evidence" value="ECO:0000314"/>
    <property type="project" value="HPA"/>
</dbReference>
<dbReference type="GO" id="GO:0070062">
    <property type="term" value="C:extracellular exosome"/>
    <property type="evidence" value="ECO:0007005"/>
    <property type="project" value="UniProtKB"/>
</dbReference>
<dbReference type="GO" id="GO:0005615">
    <property type="term" value="C:extracellular space"/>
    <property type="evidence" value="ECO:0007005"/>
    <property type="project" value="UniProtKB"/>
</dbReference>
<dbReference type="GO" id="GO:0016020">
    <property type="term" value="C:membrane"/>
    <property type="evidence" value="ECO:0000314"/>
    <property type="project" value="CAFA"/>
</dbReference>
<dbReference type="GO" id="GO:0000015">
    <property type="term" value="C:phosphopyruvate hydratase complex"/>
    <property type="evidence" value="ECO:0000318"/>
    <property type="project" value="GO_Central"/>
</dbReference>
<dbReference type="GO" id="GO:0005886">
    <property type="term" value="C:plasma membrane"/>
    <property type="evidence" value="ECO:0000314"/>
    <property type="project" value="HPA"/>
</dbReference>
<dbReference type="GO" id="GO:0000287">
    <property type="term" value="F:magnesium ion binding"/>
    <property type="evidence" value="ECO:0007669"/>
    <property type="project" value="InterPro"/>
</dbReference>
<dbReference type="GO" id="GO:0004634">
    <property type="term" value="F:phosphopyruvate hydratase activity"/>
    <property type="evidence" value="ECO:0000318"/>
    <property type="project" value="GO_Central"/>
</dbReference>
<dbReference type="GO" id="GO:0061621">
    <property type="term" value="P:canonical glycolysis"/>
    <property type="evidence" value="ECO:0000304"/>
    <property type="project" value="Reactome"/>
</dbReference>
<dbReference type="GO" id="GO:0006094">
    <property type="term" value="P:gluconeogenesis"/>
    <property type="evidence" value="ECO:0000304"/>
    <property type="project" value="Reactome"/>
</dbReference>
<dbReference type="GO" id="GO:0006096">
    <property type="term" value="P:glycolytic process"/>
    <property type="evidence" value="ECO:0000318"/>
    <property type="project" value="GO_Central"/>
</dbReference>
<dbReference type="CDD" id="cd03313">
    <property type="entry name" value="enolase"/>
    <property type="match status" value="1"/>
</dbReference>
<dbReference type="FunFam" id="3.30.390.10:FF:000001">
    <property type="entry name" value="Enolase"/>
    <property type="match status" value="1"/>
</dbReference>
<dbReference type="FunFam" id="3.20.20.120:FF:000002">
    <property type="entry name" value="Enolase 1"/>
    <property type="match status" value="1"/>
</dbReference>
<dbReference type="Gene3D" id="3.20.20.120">
    <property type="entry name" value="Enolase-like C-terminal domain"/>
    <property type="match status" value="1"/>
</dbReference>
<dbReference type="Gene3D" id="3.30.390.10">
    <property type="entry name" value="Enolase-like, N-terminal domain"/>
    <property type="match status" value="1"/>
</dbReference>
<dbReference type="HAMAP" id="MF_00318">
    <property type="entry name" value="Enolase"/>
    <property type="match status" value="1"/>
</dbReference>
<dbReference type="InterPro" id="IPR000941">
    <property type="entry name" value="Enolase"/>
</dbReference>
<dbReference type="InterPro" id="IPR036849">
    <property type="entry name" value="Enolase-like_C_sf"/>
</dbReference>
<dbReference type="InterPro" id="IPR029017">
    <property type="entry name" value="Enolase-like_N"/>
</dbReference>
<dbReference type="InterPro" id="IPR020810">
    <property type="entry name" value="Enolase_C"/>
</dbReference>
<dbReference type="InterPro" id="IPR020809">
    <property type="entry name" value="Enolase_CS"/>
</dbReference>
<dbReference type="InterPro" id="IPR020811">
    <property type="entry name" value="Enolase_N"/>
</dbReference>
<dbReference type="NCBIfam" id="TIGR01060">
    <property type="entry name" value="eno"/>
    <property type="match status" value="1"/>
</dbReference>
<dbReference type="PANTHER" id="PTHR11902:SF5">
    <property type="entry name" value="BETA-ENOLASE"/>
    <property type="match status" value="1"/>
</dbReference>
<dbReference type="PANTHER" id="PTHR11902">
    <property type="entry name" value="ENOLASE"/>
    <property type="match status" value="1"/>
</dbReference>
<dbReference type="Pfam" id="PF00113">
    <property type="entry name" value="Enolase_C"/>
    <property type="match status" value="1"/>
</dbReference>
<dbReference type="Pfam" id="PF03952">
    <property type="entry name" value="Enolase_N"/>
    <property type="match status" value="1"/>
</dbReference>
<dbReference type="PIRSF" id="PIRSF001400">
    <property type="entry name" value="Enolase"/>
    <property type="match status" value="1"/>
</dbReference>
<dbReference type="PRINTS" id="PR00148">
    <property type="entry name" value="ENOLASE"/>
</dbReference>
<dbReference type="SFLD" id="SFLDF00002">
    <property type="entry name" value="enolase"/>
    <property type="match status" value="1"/>
</dbReference>
<dbReference type="SFLD" id="SFLDG00178">
    <property type="entry name" value="enolase"/>
    <property type="match status" value="1"/>
</dbReference>
<dbReference type="SMART" id="SM01192">
    <property type="entry name" value="Enolase_C"/>
    <property type="match status" value="1"/>
</dbReference>
<dbReference type="SMART" id="SM01193">
    <property type="entry name" value="Enolase_N"/>
    <property type="match status" value="1"/>
</dbReference>
<dbReference type="SUPFAM" id="SSF51604">
    <property type="entry name" value="Enolase C-terminal domain-like"/>
    <property type="match status" value="1"/>
</dbReference>
<dbReference type="SUPFAM" id="SSF54826">
    <property type="entry name" value="Enolase N-terminal domain-like"/>
    <property type="match status" value="1"/>
</dbReference>
<dbReference type="PROSITE" id="PS00164">
    <property type="entry name" value="ENOLASE"/>
    <property type="match status" value="1"/>
</dbReference>
<keyword id="KW-0002">3D-structure</keyword>
<keyword id="KW-0007">Acetylation</keyword>
<keyword id="KW-0025">Alternative splicing</keyword>
<keyword id="KW-0963">Cytoplasm</keyword>
<keyword id="KW-0225">Disease variant</keyword>
<keyword id="KW-0322">Glycogen storage disease</keyword>
<keyword id="KW-0324">Glycolysis</keyword>
<keyword id="KW-0456">Lyase</keyword>
<keyword id="KW-0460">Magnesium</keyword>
<keyword id="KW-0479">Metal-binding</keyword>
<keyword id="KW-0597">Phosphoprotein</keyword>
<keyword id="KW-1267">Proteomics identification</keyword>
<keyword id="KW-1185">Reference proteome</keyword>
<organism>
    <name type="scientific">Homo sapiens</name>
    <name type="common">Human</name>
    <dbReference type="NCBI Taxonomy" id="9606"/>
    <lineage>
        <taxon>Eukaryota</taxon>
        <taxon>Metazoa</taxon>
        <taxon>Chordata</taxon>
        <taxon>Craniata</taxon>
        <taxon>Vertebrata</taxon>
        <taxon>Euteleostomi</taxon>
        <taxon>Mammalia</taxon>
        <taxon>Eutheria</taxon>
        <taxon>Euarchontoglires</taxon>
        <taxon>Primates</taxon>
        <taxon>Haplorrhini</taxon>
        <taxon>Catarrhini</taxon>
        <taxon>Hominidae</taxon>
        <taxon>Homo</taxon>
    </lineage>
</organism>
<gene>
    <name type="primary">ENO3</name>
</gene>
<reference key="1">
    <citation type="journal article" date="1989" name="Nucleic Acids Res.">
        <title>Structure of human muscle (beta) enolase mRNA and protein deduced from a genomic clone.</title>
        <authorList>
            <person name="Peshavaria M."/>
            <person name="Hinks L.J."/>
            <person name="Day I.N.M."/>
        </authorList>
    </citation>
    <scope>NUCLEOTIDE SEQUENCE [MRNA] (ISOFORM 1)</scope>
</reference>
<reference key="2">
    <citation type="journal article" date="1990" name="Nucleic Acids Res.">
        <title>Nucleotide sequence of a cDNA encoding the human muscle-specific enolase (MSE).</title>
        <authorList>
            <person name="Cali L."/>
            <person name="Feo S."/>
            <person name="Oliva D."/>
            <person name="Giallongo A."/>
        </authorList>
    </citation>
    <scope>NUCLEOTIDE SEQUENCE [MRNA] (ISOFORM 1)</scope>
    <scope>VARIANT ALA-85</scope>
</reference>
<reference key="3">
    <citation type="journal article" date="1991" name="Biochem. J.">
        <title>Molecular structure of the human muscle-specific enolase gene (ENO3).</title>
        <authorList>
            <person name="Peshavaria M."/>
            <person name="Day I.N.M."/>
        </authorList>
    </citation>
    <scope>NUCLEOTIDE SEQUENCE [GENOMIC DNA] (ISOFORM 1)</scope>
</reference>
<reference key="4">
    <citation type="journal article" date="1993" name="Eur. J. Biochem.">
        <title>Structural features of the human gene for muscle-specific enolase. Differential splicing in the 5'-untranslated sequence generates two forms of mRNA.</title>
        <authorList>
            <person name="Giallongo A."/>
            <person name="Venturella S."/>
            <person name="Oliva D."/>
            <person name="Barbieri G."/>
            <person name="Rubino P."/>
            <person name="Feo S."/>
        </authorList>
    </citation>
    <scope>NUCLEOTIDE SEQUENCE [GENOMIC DNA] (ISOFORM 1)</scope>
    <scope>VARIANTS SER-71 AND ALA-85</scope>
</reference>
<reference key="5">
    <citation type="journal article" date="2004" name="Nat. Genet.">
        <title>Complete sequencing and characterization of 21,243 full-length human cDNAs.</title>
        <authorList>
            <person name="Ota T."/>
            <person name="Suzuki Y."/>
            <person name="Nishikawa T."/>
            <person name="Otsuki T."/>
            <person name="Sugiyama T."/>
            <person name="Irie R."/>
            <person name="Wakamatsu A."/>
            <person name="Hayashi K."/>
            <person name="Sato H."/>
            <person name="Nagai K."/>
            <person name="Kimura K."/>
            <person name="Makita H."/>
            <person name="Sekine M."/>
            <person name="Obayashi M."/>
            <person name="Nishi T."/>
            <person name="Shibahara T."/>
            <person name="Tanaka T."/>
            <person name="Ishii S."/>
            <person name="Yamamoto J."/>
            <person name="Saito K."/>
            <person name="Kawai Y."/>
            <person name="Isono Y."/>
            <person name="Nakamura Y."/>
            <person name="Nagahari K."/>
            <person name="Murakami K."/>
            <person name="Yasuda T."/>
            <person name="Iwayanagi T."/>
            <person name="Wagatsuma M."/>
            <person name="Shiratori A."/>
            <person name="Sudo H."/>
            <person name="Hosoiri T."/>
            <person name="Kaku Y."/>
            <person name="Kodaira H."/>
            <person name="Kondo H."/>
            <person name="Sugawara M."/>
            <person name="Takahashi M."/>
            <person name="Kanda K."/>
            <person name="Yokoi T."/>
            <person name="Furuya T."/>
            <person name="Kikkawa E."/>
            <person name="Omura Y."/>
            <person name="Abe K."/>
            <person name="Kamihara K."/>
            <person name="Katsuta N."/>
            <person name="Sato K."/>
            <person name="Tanikawa M."/>
            <person name="Yamazaki M."/>
            <person name="Ninomiya K."/>
            <person name="Ishibashi T."/>
            <person name="Yamashita H."/>
            <person name="Murakawa K."/>
            <person name="Fujimori K."/>
            <person name="Tanai H."/>
            <person name="Kimata M."/>
            <person name="Watanabe M."/>
            <person name="Hiraoka S."/>
            <person name="Chiba Y."/>
            <person name="Ishida S."/>
            <person name="Ono Y."/>
            <person name="Takiguchi S."/>
            <person name="Watanabe S."/>
            <person name="Yosida M."/>
            <person name="Hotuta T."/>
            <person name="Kusano J."/>
            <person name="Kanehori K."/>
            <person name="Takahashi-Fujii A."/>
            <person name="Hara H."/>
            <person name="Tanase T.-O."/>
            <person name="Nomura Y."/>
            <person name="Togiya S."/>
            <person name="Komai F."/>
            <person name="Hara R."/>
            <person name="Takeuchi K."/>
            <person name="Arita M."/>
            <person name="Imose N."/>
            <person name="Musashino K."/>
            <person name="Yuuki H."/>
            <person name="Oshima A."/>
            <person name="Sasaki N."/>
            <person name="Aotsuka S."/>
            <person name="Yoshikawa Y."/>
            <person name="Matsunawa H."/>
            <person name="Ichihara T."/>
            <person name="Shiohata N."/>
            <person name="Sano S."/>
            <person name="Moriya S."/>
            <person name="Momiyama H."/>
            <person name="Satoh N."/>
            <person name="Takami S."/>
            <person name="Terashima Y."/>
            <person name="Suzuki O."/>
            <person name="Nakagawa S."/>
            <person name="Senoh A."/>
            <person name="Mizoguchi H."/>
            <person name="Goto Y."/>
            <person name="Shimizu F."/>
            <person name="Wakebe H."/>
            <person name="Hishigaki H."/>
            <person name="Watanabe T."/>
            <person name="Sugiyama A."/>
            <person name="Takemoto M."/>
            <person name="Kawakami B."/>
            <person name="Yamazaki M."/>
            <person name="Watanabe K."/>
            <person name="Kumagai A."/>
            <person name="Itakura S."/>
            <person name="Fukuzumi Y."/>
            <person name="Fujimori Y."/>
            <person name="Komiyama M."/>
            <person name="Tashiro H."/>
            <person name="Tanigami A."/>
            <person name="Fujiwara T."/>
            <person name="Ono T."/>
            <person name="Yamada K."/>
            <person name="Fujii Y."/>
            <person name="Ozaki K."/>
            <person name="Hirao M."/>
            <person name="Ohmori Y."/>
            <person name="Kawabata A."/>
            <person name="Hikiji T."/>
            <person name="Kobatake N."/>
            <person name="Inagaki H."/>
            <person name="Ikema Y."/>
            <person name="Okamoto S."/>
            <person name="Okitani R."/>
            <person name="Kawakami T."/>
            <person name="Noguchi S."/>
            <person name="Itoh T."/>
            <person name="Shigeta K."/>
            <person name="Senba T."/>
            <person name="Matsumura K."/>
            <person name="Nakajima Y."/>
            <person name="Mizuno T."/>
            <person name="Morinaga M."/>
            <person name="Sasaki M."/>
            <person name="Togashi T."/>
            <person name="Oyama M."/>
            <person name="Hata H."/>
            <person name="Watanabe M."/>
            <person name="Komatsu T."/>
            <person name="Mizushima-Sugano J."/>
            <person name="Satoh T."/>
            <person name="Shirai Y."/>
            <person name="Takahashi Y."/>
            <person name="Nakagawa K."/>
            <person name="Okumura K."/>
            <person name="Nagase T."/>
            <person name="Nomura N."/>
            <person name="Kikuchi H."/>
            <person name="Masuho Y."/>
            <person name="Yamashita R."/>
            <person name="Nakai K."/>
            <person name="Yada T."/>
            <person name="Nakamura Y."/>
            <person name="Ohara O."/>
            <person name="Isogai T."/>
            <person name="Sugano S."/>
        </authorList>
    </citation>
    <scope>NUCLEOTIDE SEQUENCE [LARGE SCALE MRNA] (ISOFORMS 2 AND 3)</scope>
    <scope>VARIANTS SER-71 AND ALA-85</scope>
    <source>
        <tissue>Skeletal muscle</tissue>
    </source>
</reference>
<reference key="6">
    <citation type="journal article" date="2006" name="Nature">
        <title>DNA sequence of human chromosome 17 and analysis of rearrangement in the human lineage.</title>
        <authorList>
            <person name="Zody M.C."/>
            <person name="Garber M."/>
            <person name="Adams D.J."/>
            <person name="Sharpe T."/>
            <person name="Harrow J."/>
            <person name="Lupski J.R."/>
            <person name="Nicholson C."/>
            <person name="Searle S.M."/>
            <person name="Wilming L."/>
            <person name="Young S.K."/>
            <person name="Abouelleil A."/>
            <person name="Allen N.R."/>
            <person name="Bi W."/>
            <person name="Bloom T."/>
            <person name="Borowsky M.L."/>
            <person name="Bugalter B.E."/>
            <person name="Butler J."/>
            <person name="Chang J.L."/>
            <person name="Chen C.-K."/>
            <person name="Cook A."/>
            <person name="Corum B."/>
            <person name="Cuomo C.A."/>
            <person name="de Jong P.J."/>
            <person name="DeCaprio D."/>
            <person name="Dewar K."/>
            <person name="FitzGerald M."/>
            <person name="Gilbert J."/>
            <person name="Gibson R."/>
            <person name="Gnerre S."/>
            <person name="Goldstein S."/>
            <person name="Grafham D.V."/>
            <person name="Grocock R."/>
            <person name="Hafez N."/>
            <person name="Hagopian D.S."/>
            <person name="Hart E."/>
            <person name="Norman C.H."/>
            <person name="Humphray S."/>
            <person name="Jaffe D.B."/>
            <person name="Jones M."/>
            <person name="Kamal M."/>
            <person name="Khodiyar V.K."/>
            <person name="LaButti K."/>
            <person name="Laird G."/>
            <person name="Lehoczky J."/>
            <person name="Liu X."/>
            <person name="Lokyitsang T."/>
            <person name="Loveland J."/>
            <person name="Lui A."/>
            <person name="Macdonald P."/>
            <person name="Major J.E."/>
            <person name="Matthews L."/>
            <person name="Mauceli E."/>
            <person name="McCarroll S.A."/>
            <person name="Mihalev A.H."/>
            <person name="Mudge J."/>
            <person name="Nguyen C."/>
            <person name="Nicol R."/>
            <person name="O'Leary S.B."/>
            <person name="Osoegawa K."/>
            <person name="Schwartz D.C."/>
            <person name="Shaw-Smith C."/>
            <person name="Stankiewicz P."/>
            <person name="Steward C."/>
            <person name="Swarbreck D."/>
            <person name="Venkataraman V."/>
            <person name="Whittaker C.A."/>
            <person name="Yang X."/>
            <person name="Zimmer A.R."/>
            <person name="Bradley A."/>
            <person name="Hubbard T."/>
            <person name="Birren B.W."/>
            <person name="Rogers J."/>
            <person name="Lander E.S."/>
            <person name="Nusbaum C."/>
        </authorList>
    </citation>
    <scope>NUCLEOTIDE SEQUENCE [LARGE SCALE GENOMIC DNA]</scope>
</reference>
<reference key="7">
    <citation type="submission" date="2005-09" db="EMBL/GenBank/DDBJ databases">
        <authorList>
            <person name="Mural R.J."/>
            <person name="Istrail S."/>
            <person name="Sutton G."/>
            <person name="Florea L."/>
            <person name="Halpern A.L."/>
            <person name="Mobarry C.M."/>
            <person name="Lippert R."/>
            <person name="Walenz B."/>
            <person name="Shatkay H."/>
            <person name="Dew I."/>
            <person name="Miller J.R."/>
            <person name="Flanigan M.J."/>
            <person name="Edwards N.J."/>
            <person name="Bolanos R."/>
            <person name="Fasulo D."/>
            <person name="Halldorsson B.V."/>
            <person name="Hannenhalli S."/>
            <person name="Turner R."/>
            <person name="Yooseph S."/>
            <person name="Lu F."/>
            <person name="Nusskern D.R."/>
            <person name="Shue B.C."/>
            <person name="Zheng X.H."/>
            <person name="Zhong F."/>
            <person name="Delcher A.L."/>
            <person name="Huson D.H."/>
            <person name="Kravitz S.A."/>
            <person name="Mouchard L."/>
            <person name="Reinert K."/>
            <person name="Remington K.A."/>
            <person name="Clark A.G."/>
            <person name="Waterman M.S."/>
            <person name="Eichler E.E."/>
            <person name="Adams M.D."/>
            <person name="Hunkapiller M.W."/>
            <person name="Myers E.W."/>
            <person name="Venter J.C."/>
        </authorList>
    </citation>
    <scope>NUCLEOTIDE SEQUENCE [LARGE SCALE GENOMIC DNA]</scope>
</reference>
<reference key="8">
    <citation type="journal article" date="2004" name="Genome Res.">
        <title>The status, quality, and expansion of the NIH full-length cDNA project: the Mammalian Gene Collection (MGC).</title>
        <authorList>
            <consortium name="The MGC Project Team"/>
        </authorList>
    </citation>
    <scope>NUCLEOTIDE SEQUENCE [LARGE SCALE MRNA] (ISOFORM 1)</scope>
    <scope>VARIANTS SER-71 AND ALA-85</scope>
    <source>
        <tissue>Muscle</tissue>
    </source>
</reference>
<reference key="9">
    <citation type="journal article" date="2004" name="Acta Biochim. Biophys. Sin.">
        <title>Characterization of MR-1, a novel myofibrillogenesis regulator in human muscle.</title>
        <authorList>
            <person name="Li T.-B."/>
            <person name="Liu X.-H."/>
            <person name="Feng S."/>
            <person name="Hu Y."/>
            <person name="Yang W.-X."/>
            <person name="Han Y."/>
            <person name="Wang Y.-G."/>
            <person name="Gong L.-M."/>
        </authorList>
    </citation>
    <scope>INTERACTION WITH PNKD</scope>
</reference>
<reference key="10">
    <citation type="journal article" date="2011" name="BMC Syst. Biol.">
        <title>Initial characterization of the human central proteome.</title>
        <authorList>
            <person name="Burkard T.R."/>
            <person name="Planyavsky M."/>
            <person name="Kaupe I."/>
            <person name="Breitwieser F.P."/>
            <person name="Buerckstuemmer T."/>
            <person name="Bennett K.L."/>
            <person name="Superti-Furga G."/>
            <person name="Colinge J."/>
        </authorList>
    </citation>
    <scope>IDENTIFICATION BY MASS SPECTROMETRY [LARGE SCALE ANALYSIS]</scope>
</reference>
<reference key="11">
    <citation type="journal article" date="2012" name="Proc. Natl. Acad. Sci. U.S.A.">
        <title>N-terminal acetylome analyses and functional insights of the N-terminal acetyltransferase NatB.</title>
        <authorList>
            <person name="Van Damme P."/>
            <person name="Lasa M."/>
            <person name="Polevoda B."/>
            <person name="Gazquez C."/>
            <person name="Elosegui-Artola A."/>
            <person name="Kim D.S."/>
            <person name="De Juan-Pardo E."/>
            <person name="Demeyer K."/>
            <person name="Hole K."/>
            <person name="Larrea E."/>
            <person name="Timmerman E."/>
            <person name="Prieto J."/>
            <person name="Arnesen T."/>
            <person name="Sherman F."/>
            <person name="Gevaert K."/>
            <person name="Aldabe R."/>
        </authorList>
    </citation>
    <scope>ACETYLATION [LARGE SCALE ANALYSIS] AT ALA-2</scope>
    <scope>CLEAVAGE OF INITIATOR METHIONINE [LARGE SCALE ANALYSIS]</scope>
    <scope>IDENTIFICATION BY MASS SPECTROMETRY [LARGE SCALE ANALYSIS]</scope>
</reference>
<reference key="12">
    <citation type="journal article" date="2014" name="J. Proteomics">
        <title>An enzyme assisted RP-RPLC approach for in-depth analysis of human liver phosphoproteome.</title>
        <authorList>
            <person name="Bian Y."/>
            <person name="Song C."/>
            <person name="Cheng K."/>
            <person name="Dong M."/>
            <person name="Wang F."/>
            <person name="Huang J."/>
            <person name="Sun D."/>
            <person name="Wang L."/>
            <person name="Ye M."/>
            <person name="Zou H."/>
        </authorList>
    </citation>
    <scope>PHOSPHORYLATION [LARGE SCALE ANALYSIS] AT SER-176 AND SER-263</scope>
    <scope>IDENTIFICATION BY MASS SPECTROMETRY [LARGE SCALE ANALYSIS]</scope>
    <source>
        <tissue>Liver</tissue>
    </source>
</reference>
<reference key="13">
    <citation type="journal article" date="2001" name="Ann. Neurol.">
        <title>Beta-enolase deficiency, a new metabolic myopathy of distal glycolysis.</title>
        <authorList>
            <person name="Comi G.P."/>
            <person name="Fortunato F."/>
            <person name="Lucchiari S."/>
            <person name="Bordoni A."/>
            <person name="Prelle A."/>
            <person name="Jann S."/>
            <person name="Keller A."/>
            <person name="Ciscato P."/>
            <person name="Galbiati S."/>
            <person name="Chiveri L."/>
            <person name="Torrente Y."/>
            <person name="Scarlato G."/>
            <person name="Bresolin N."/>
        </authorList>
    </citation>
    <scope>VARIANTS GSD13 ASP-156 AND GLU-374</scope>
</reference>
<accession>P13929</accession>
<accession>B4DUI6</accession>
<accession>B4DUM6</accession>
<accession>D3DTL2</accession>
<accession>E7ENK8</accession>
<accession>Q96AE2</accession>
<protein>
    <recommendedName>
        <fullName>Beta-enolase</fullName>
        <ecNumber evidence="2">4.2.1.11</ecNumber>
    </recommendedName>
    <alternativeName>
        <fullName>2-phospho-D-glycerate hydro-lyase</fullName>
    </alternativeName>
    <alternativeName>
        <fullName>Enolase 3</fullName>
    </alternativeName>
    <alternativeName>
        <fullName>Muscle-specific enolase</fullName>
        <shortName>MSE</shortName>
    </alternativeName>
    <alternativeName>
        <fullName>Skeletal muscle enolase</fullName>
    </alternativeName>
</protein>
<feature type="initiator methionine" description="Removed" evidence="11">
    <location>
        <position position="1"/>
    </location>
</feature>
<feature type="chain" id="PRO_0000134107" description="Beta-enolase">
    <location>
        <begin position="2"/>
        <end position="434"/>
    </location>
</feature>
<feature type="active site" description="Proton donor" evidence="1">
    <location>
        <position position="210"/>
    </location>
</feature>
<feature type="active site" description="Proton acceptor" evidence="1">
    <location>
        <position position="343"/>
    </location>
</feature>
<feature type="binding site" evidence="1">
    <location>
        <position position="158"/>
    </location>
    <ligand>
        <name>substrate</name>
    </ligand>
</feature>
<feature type="binding site" evidence="1">
    <location>
        <position position="167"/>
    </location>
    <ligand>
        <name>substrate</name>
    </ligand>
</feature>
<feature type="binding site" evidence="1">
    <location>
        <position position="245"/>
    </location>
    <ligand>
        <name>Mg(2+)</name>
        <dbReference type="ChEBI" id="CHEBI:18420"/>
    </ligand>
</feature>
<feature type="binding site" evidence="1">
    <location>
        <position position="293"/>
    </location>
    <ligand>
        <name>Mg(2+)</name>
        <dbReference type="ChEBI" id="CHEBI:18420"/>
    </ligand>
</feature>
<feature type="binding site" evidence="1">
    <location>
        <position position="293"/>
    </location>
    <ligand>
        <name>substrate</name>
    </ligand>
</feature>
<feature type="binding site" evidence="1">
    <location>
        <position position="318"/>
    </location>
    <ligand>
        <name>Mg(2+)</name>
        <dbReference type="ChEBI" id="CHEBI:18420"/>
    </ligand>
</feature>
<feature type="binding site" evidence="1">
    <location>
        <position position="318"/>
    </location>
    <ligand>
        <name>substrate</name>
    </ligand>
</feature>
<feature type="binding site" evidence="1">
    <location>
        <begin position="370"/>
        <end position="373"/>
    </location>
    <ligand>
        <name>substrate</name>
    </ligand>
</feature>
<feature type="binding site" evidence="1">
    <location>
        <position position="394"/>
    </location>
    <ligand>
        <name>substrate</name>
    </ligand>
</feature>
<feature type="modified residue" description="N-acetylalanine" evidence="11">
    <location>
        <position position="2"/>
    </location>
</feature>
<feature type="modified residue" description="Phosphothreonine" evidence="2">
    <location>
        <position position="72"/>
    </location>
</feature>
<feature type="modified residue" description="Phosphoserine" evidence="2">
    <location>
        <position position="83"/>
    </location>
</feature>
<feature type="modified residue" description="Phosphoserine" evidence="2">
    <location>
        <position position="157"/>
    </location>
</feature>
<feature type="modified residue" description="Phosphoserine" evidence="12">
    <location>
        <position position="176"/>
    </location>
</feature>
<feature type="modified residue" description="Phosphothreonine" evidence="2">
    <location>
        <position position="205"/>
    </location>
</feature>
<feature type="modified residue" description="Phosphothreonine" evidence="2">
    <location>
        <position position="229"/>
    </location>
</feature>
<feature type="modified residue" description="Phosphotyrosine" evidence="2">
    <location>
        <position position="236"/>
    </location>
</feature>
<feature type="modified residue" description="Phosphoserine" evidence="12">
    <location>
        <position position="263"/>
    </location>
</feature>
<feature type="splice variant" id="VSP_037752" description="In isoform 3." evidence="9">
    <original>GVLKAVENINNTLGPALLQKKLSVVDQEKVDKFMIELDGTENKS</original>
    <variation>A</variation>
    <location>
        <begin position="61"/>
        <end position="104"/>
    </location>
</feature>
<feature type="splice variant" id="VSP_037753" description="In isoform 2." evidence="9">
    <location>
        <begin position="150"/>
        <end position="177"/>
    </location>
</feature>
<feature type="sequence variant" id="VAR_020618" description="In dbSNP:rs238238." evidence="4 6 8">
    <original>N</original>
    <variation>S</variation>
    <location>
        <position position="71"/>
    </location>
</feature>
<feature type="sequence variant" id="VAR_020619" description="In dbSNP:rs238239." evidence="4 6 7 8">
    <original>V</original>
    <variation>A</variation>
    <location>
        <position position="85"/>
    </location>
</feature>
<feature type="sequence variant" id="VAR_020620" description="In GSD13; dbSNP:rs121918403." evidence="3">
    <original>G</original>
    <variation>D</variation>
    <location>
        <position position="156"/>
    </location>
</feature>
<feature type="sequence variant" id="VAR_020621" description="In GSD13; dbSNP:rs121918404." evidence="3">
    <original>G</original>
    <variation>E</variation>
    <location>
        <position position="374"/>
    </location>
</feature>
<feature type="strand" evidence="13">
    <location>
        <begin position="5"/>
        <end position="12"/>
    </location>
</feature>
<feature type="strand" evidence="13">
    <location>
        <begin position="18"/>
        <end position="26"/>
    </location>
</feature>
<feature type="strand" evidence="13">
    <location>
        <begin position="29"/>
        <end position="34"/>
    </location>
</feature>
<feature type="strand" evidence="13">
    <location>
        <begin position="43"/>
        <end position="45"/>
    </location>
</feature>
<feature type="helix" evidence="13">
    <location>
        <begin position="57"/>
        <end position="59"/>
    </location>
</feature>
<feature type="helix" evidence="13">
    <location>
        <begin position="63"/>
        <end position="71"/>
    </location>
</feature>
<feature type="helix" evidence="13">
    <location>
        <begin position="73"/>
        <end position="79"/>
    </location>
</feature>
<feature type="helix" evidence="13">
    <location>
        <begin position="87"/>
        <end position="98"/>
    </location>
</feature>
<feature type="turn" evidence="13">
    <location>
        <begin position="104"/>
        <end position="106"/>
    </location>
</feature>
<feature type="helix" evidence="13">
    <location>
        <begin position="108"/>
        <end position="125"/>
    </location>
</feature>
<feature type="helix" evidence="13">
    <location>
        <begin position="130"/>
        <end position="138"/>
    </location>
</feature>
<feature type="strand" evidence="13">
    <location>
        <begin position="150"/>
        <end position="154"/>
    </location>
</feature>
<feature type="helix" evidence="13">
    <location>
        <begin position="156"/>
        <end position="158"/>
    </location>
</feature>
<feature type="strand" evidence="13">
    <location>
        <begin position="159"/>
        <end position="162"/>
    </location>
</feature>
<feature type="strand" evidence="13">
    <location>
        <begin position="167"/>
        <end position="171"/>
    </location>
</feature>
<feature type="helix" evidence="13">
    <location>
        <begin position="178"/>
        <end position="200"/>
    </location>
</feature>
<feature type="helix" evidence="13">
    <location>
        <begin position="220"/>
        <end position="234"/>
    </location>
</feature>
<feature type="turn" evidence="13">
    <location>
        <begin position="237"/>
        <end position="239"/>
    </location>
</feature>
<feature type="strand" evidence="13">
    <location>
        <begin position="241"/>
        <end position="245"/>
    </location>
</feature>
<feature type="helix" evidence="13">
    <location>
        <begin position="248"/>
        <end position="251"/>
    </location>
</feature>
<feature type="turn" evidence="13">
    <location>
        <begin position="259"/>
        <end position="262"/>
    </location>
</feature>
<feature type="helix" evidence="13">
    <location>
        <begin position="267"/>
        <end position="269"/>
    </location>
</feature>
<feature type="helix" evidence="13">
    <location>
        <begin position="273"/>
        <end position="286"/>
    </location>
</feature>
<feature type="strand" evidence="13">
    <location>
        <begin position="289"/>
        <end position="293"/>
    </location>
</feature>
<feature type="helix" evidence="13">
    <location>
        <begin position="301"/>
        <end position="309"/>
    </location>
</feature>
<feature type="strand" evidence="13">
    <location>
        <begin position="313"/>
        <end position="318"/>
    </location>
</feature>
<feature type="turn" evidence="13">
    <location>
        <begin position="319"/>
        <end position="323"/>
    </location>
</feature>
<feature type="helix" evidence="13">
    <location>
        <begin position="325"/>
        <end position="334"/>
    </location>
</feature>
<feature type="strand" evidence="13">
    <location>
        <begin position="338"/>
        <end position="342"/>
    </location>
</feature>
<feature type="helix" evidence="13">
    <location>
        <begin position="344"/>
        <end position="347"/>
    </location>
</feature>
<feature type="helix" evidence="13">
    <location>
        <begin position="350"/>
        <end position="362"/>
    </location>
</feature>
<feature type="strand" evidence="13">
    <location>
        <begin position="366"/>
        <end position="370"/>
    </location>
</feature>
<feature type="helix" evidence="13">
    <location>
        <begin position="380"/>
        <end position="388"/>
    </location>
</feature>
<feature type="strand" evidence="13">
    <location>
        <begin position="391"/>
        <end position="394"/>
    </location>
</feature>
<feature type="helix" evidence="13">
    <location>
        <begin position="401"/>
        <end position="417"/>
    </location>
</feature>
<feature type="helix" evidence="13">
    <location>
        <begin position="418"/>
        <end position="420"/>
    </location>
</feature>
<feature type="helix" evidence="13">
    <location>
        <begin position="425"/>
        <end position="427"/>
    </location>
</feature>
<sequence>MAMQKIFAREILDSRGNPTVEVDLHTAKGRFRAAVPSGASTGIYEALELRDGDKGRYLGKGVLKAVENINNTLGPALLQKKLSVVDQEKVDKFMIELDGTENKSKFGANAILGVSLAVCKAGAAEKGVPLYRHIADLAGNPDLILPVPAFNVINGGSHAGNKLAMQEFMILPVGASSFKEAMRIGAEVYHHLKGVIKAKYGKDATNVGDEGGFAPNILENNEALELLKTAIQAAGYPDKVVIGMDVAASEFYRNGKYDLDFKSPDDPARHITGEKLGELYKSFIKNYPVVSIEDPFDQDDWATWTSFLSGVNIQIVGDDLTVTNPKRIAQAVEKKACNCLLLKVNQIGSVTESIQACKLAQSNGWGVMVSHRSGETEDTFIADLVVGLCTGQIKTGAPCRSERLAKYNQLMRIEEALGDKAIFAGRKFRNPKAK</sequence>
<evidence type="ECO:0000250" key="1"/>
<evidence type="ECO:0000250" key="2">
    <source>
        <dbReference type="UniProtKB" id="P15429"/>
    </source>
</evidence>
<evidence type="ECO:0000269" key="3">
    <source>
    </source>
</evidence>
<evidence type="ECO:0000269" key="4">
    <source>
    </source>
</evidence>
<evidence type="ECO:0000269" key="5">
    <source>
    </source>
</evidence>
<evidence type="ECO:0000269" key="6">
    <source>
    </source>
</evidence>
<evidence type="ECO:0000269" key="7">
    <source>
    </source>
</evidence>
<evidence type="ECO:0000269" key="8">
    <source>
    </source>
</evidence>
<evidence type="ECO:0000303" key="9">
    <source>
    </source>
</evidence>
<evidence type="ECO:0000305" key="10"/>
<evidence type="ECO:0007744" key="11">
    <source>
    </source>
</evidence>
<evidence type="ECO:0007744" key="12">
    <source>
    </source>
</evidence>
<evidence type="ECO:0007829" key="13">
    <source>
        <dbReference type="PDB" id="2XSX"/>
    </source>
</evidence>
<proteinExistence type="evidence at protein level"/>